<name>DHAR2_ARATH</name>
<reference key="1">
    <citation type="journal article" date="2003" name="Proc. Natl. Acad. Sci. U.S.A.">
        <title>Increasing vitamin C content of plants through enhanced ascorbate recycling.</title>
        <authorList>
            <person name="Chen Z."/>
            <person name="Young T.E."/>
            <person name="Ling J."/>
            <person name="Chang S.C."/>
            <person name="Gallie D.R."/>
        </authorList>
    </citation>
    <scope>NUCLEOTIDE SEQUENCE [MRNA]</scope>
</reference>
<reference key="2">
    <citation type="journal article" date="2000" name="Nature">
        <title>Sequence and analysis of chromosome 1 of the plant Arabidopsis thaliana.</title>
        <authorList>
            <person name="Theologis A."/>
            <person name="Ecker J.R."/>
            <person name="Palm C.J."/>
            <person name="Federspiel N.A."/>
            <person name="Kaul S."/>
            <person name="White O."/>
            <person name="Alonso J."/>
            <person name="Altafi H."/>
            <person name="Araujo R."/>
            <person name="Bowman C.L."/>
            <person name="Brooks S.Y."/>
            <person name="Buehler E."/>
            <person name="Chan A."/>
            <person name="Chao Q."/>
            <person name="Chen H."/>
            <person name="Cheuk R.F."/>
            <person name="Chin C.W."/>
            <person name="Chung M.K."/>
            <person name="Conn L."/>
            <person name="Conway A.B."/>
            <person name="Conway A.R."/>
            <person name="Creasy T.H."/>
            <person name="Dewar K."/>
            <person name="Dunn P."/>
            <person name="Etgu P."/>
            <person name="Feldblyum T.V."/>
            <person name="Feng J.-D."/>
            <person name="Fong B."/>
            <person name="Fujii C.Y."/>
            <person name="Gill J.E."/>
            <person name="Goldsmith A.D."/>
            <person name="Haas B."/>
            <person name="Hansen N.F."/>
            <person name="Hughes B."/>
            <person name="Huizar L."/>
            <person name="Hunter J.L."/>
            <person name="Jenkins J."/>
            <person name="Johnson-Hopson C."/>
            <person name="Khan S."/>
            <person name="Khaykin E."/>
            <person name="Kim C.J."/>
            <person name="Koo H.L."/>
            <person name="Kremenetskaia I."/>
            <person name="Kurtz D.B."/>
            <person name="Kwan A."/>
            <person name="Lam B."/>
            <person name="Langin-Hooper S."/>
            <person name="Lee A."/>
            <person name="Lee J.M."/>
            <person name="Lenz C.A."/>
            <person name="Li J.H."/>
            <person name="Li Y.-P."/>
            <person name="Lin X."/>
            <person name="Liu S.X."/>
            <person name="Liu Z.A."/>
            <person name="Luros J.S."/>
            <person name="Maiti R."/>
            <person name="Marziali A."/>
            <person name="Militscher J."/>
            <person name="Miranda M."/>
            <person name="Nguyen M."/>
            <person name="Nierman W.C."/>
            <person name="Osborne B.I."/>
            <person name="Pai G."/>
            <person name="Peterson J."/>
            <person name="Pham P.K."/>
            <person name="Rizzo M."/>
            <person name="Rooney T."/>
            <person name="Rowley D."/>
            <person name="Sakano H."/>
            <person name="Salzberg S.L."/>
            <person name="Schwartz J.R."/>
            <person name="Shinn P."/>
            <person name="Southwick A.M."/>
            <person name="Sun H."/>
            <person name="Tallon L.J."/>
            <person name="Tambunga G."/>
            <person name="Toriumi M.J."/>
            <person name="Town C.D."/>
            <person name="Utterback T."/>
            <person name="Van Aken S."/>
            <person name="Vaysberg M."/>
            <person name="Vysotskaia V.S."/>
            <person name="Walker M."/>
            <person name="Wu D."/>
            <person name="Yu G."/>
            <person name="Fraser C.M."/>
            <person name="Venter J.C."/>
            <person name="Davis R.W."/>
        </authorList>
    </citation>
    <scope>NUCLEOTIDE SEQUENCE [LARGE SCALE GENOMIC DNA]</scope>
    <source>
        <strain>cv. Columbia</strain>
    </source>
</reference>
<reference key="3">
    <citation type="journal article" date="2017" name="Plant J.">
        <title>Araport11: a complete reannotation of the Arabidopsis thaliana reference genome.</title>
        <authorList>
            <person name="Cheng C.Y."/>
            <person name="Krishnakumar V."/>
            <person name="Chan A.P."/>
            <person name="Thibaud-Nissen F."/>
            <person name="Schobel S."/>
            <person name="Town C.D."/>
        </authorList>
    </citation>
    <scope>GENOME REANNOTATION</scope>
    <source>
        <strain>cv. Columbia</strain>
    </source>
</reference>
<reference key="4">
    <citation type="journal article" date="2003" name="Science">
        <title>Empirical analysis of transcriptional activity in the Arabidopsis genome.</title>
        <authorList>
            <person name="Yamada K."/>
            <person name="Lim J."/>
            <person name="Dale J.M."/>
            <person name="Chen H."/>
            <person name="Shinn P."/>
            <person name="Palm C.J."/>
            <person name="Southwick A.M."/>
            <person name="Wu H.C."/>
            <person name="Kim C.J."/>
            <person name="Nguyen M."/>
            <person name="Pham P.K."/>
            <person name="Cheuk R.F."/>
            <person name="Karlin-Newmann G."/>
            <person name="Liu S.X."/>
            <person name="Lam B."/>
            <person name="Sakano H."/>
            <person name="Wu T."/>
            <person name="Yu G."/>
            <person name="Miranda M."/>
            <person name="Quach H.L."/>
            <person name="Tripp M."/>
            <person name="Chang C.H."/>
            <person name="Lee J.M."/>
            <person name="Toriumi M.J."/>
            <person name="Chan M.M."/>
            <person name="Tang C.C."/>
            <person name="Onodera C.S."/>
            <person name="Deng J.M."/>
            <person name="Akiyama K."/>
            <person name="Ansari Y."/>
            <person name="Arakawa T."/>
            <person name="Banh J."/>
            <person name="Banno F."/>
            <person name="Bowser L."/>
            <person name="Brooks S.Y."/>
            <person name="Carninci P."/>
            <person name="Chao Q."/>
            <person name="Choy N."/>
            <person name="Enju A."/>
            <person name="Goldsmith A.D."/>
            <person name="Gurjal M."/>
            <person name="Hansen N.F."/>
            <person name="Hayashizaki Y."/>
            <person name="Johnson-Hopson C."/>
            <person name="Hsuan V.W."/>
            <person name="Iida K."/>
            <person name="Karnes M."/>
            <person name="Khan S."/>
            <person name="Koesema E."/>
            <person name="Ishida J."/>
            <person name="Jiang P.X."/>
            <person name="Jones T."/>
            <person name="Kawai J."/>
            <person name="Kamiya A."/>
            <person name="Meyers C."/>
            <person name="Nakajima M."/>
            <person name="Narusaka M."/>
            <person name="Seki M."/>
            <person name="Sakurai T."/>
            <person name="Satou M."/>
            <person name="Tamse R."/>
            <person name="Vaysberg M."/>
            <person name="Wallender E.K."/>
            <person name="Wong C."/>
            <person name="Yamamura Y."/>
            <person name="Yuan S."/>
            <person name="Shinozaki K."/>
            <person name="Davis R.W."/>
            <person name="Theologis A."/>
            <person name="Ecker J.R."/>
        </authorList>
    </citation>
    <scope>NUCLEOTIDE SEQUENCE [LARGE SCALE MRNA]</scope>
    <source>
        <strain>cv. Columbia</strain>
    </source>
</reference>
<reference key="5">
    <citation type="submission" date="2002-03" db="EMBL/GenBank/DDBJ databases">
        <title>Full-length cDNA from Arabidopsis thaliana.</title>
        <authorList>
            <person name="Brover V.V."/>
            <person name="Troukhan M.E."/>
            <person name="Alexandrov N.A."/>
            <person name="Lu Y.-P."/>
            <person name="Flavell R.B."/>
            <person name="Feldmann K.A."/>
        </authorList>
    </citation>
    <scope>NUCLEOTIDE SEQUENCE [LARGE SCALE MRNA]</scope>
</reference>
<reference key="6">
    <citation type="journal article" date="2002" name="J. Biol. Chem.">
        <title>Functional divergence in the glutathione transferase superfamily in plants. Identification of two classes with putative functions in redox homeostasis in Arabidopsis thaliana.</title>
        <authorList>
            <person name="Dixon D.P."/>
            <person name="Davis B.G."/>
            <person name="Edwards R."/>
        </authorList>
    </citation>
    <scope>GENE FAMILY</scope>
    <scope>IDENTIFICATION BY MASS SPECTROMETRY</scope>
    <scope>FUNCTION</scope>
    <scope>GLUTATHIONYLATION AT CYS-6 AND CYS-20</scope>
</reference>
<reference key="7">
    <citation type="journal article" date="2004" name="Plant Mol. Biol.">
        <title>Proteomic analysis of glutathione S -transferases of Arabidopsis thaliana reveals differential salicylic acid-induced expression of the plant-specific phi and tau classes.</title>
        <authorList>
            <person name="Sappl P.G."/>
            <person name="Onate-Sanchez L."/>
            <person name="Singh K.B."/>
            <person name="Millar A.H."/>
        </authorList>
    </citation>
    <scope>IDENTIFICATION BY MASS SPECTROMETRY</scope>
    <scope>INDUCTION BY SA</scope>
</reference>
<reference key="8">
    <citation type="journal article" date="2006" name="Plant Cell Physiol.">
        <title>Cytosolic dehydroascorbate reductase is important for ozone tolerance in Arabidopsis thaliana.</title>
        <authorList>
            <person name="Yoshida S."/>
            <person name="Tamaoki M."/>
            <person name="Shikano T."/>
            <person name="Nakajima N."/>
            <person name="Ogawa D."/>
            <person name="Ioki M."/>
            <person name="Aono M."/>
            <person name="Kubo A."/>
            <person name="Kamada H."/>
            <person name="Inoue Y."/>
            <person name="Saji H."/>
        </authorList>
    </citation>
    <scope>FUNCTION</scope>
    <scope>INDUCTION BY OZONE</scope>
    <scope>DISRUPTION PHENOTYPE</scope>
</reference>
<reference key="9">
    <citation type="journal article" date="2017" name="Sci. Rep.">
        <title>Arabidopsis thaliana dehydroascorbate reductase 2: Conformational flexibility during catalysis.</title>
        <authorList>
            <person name="Bodra N."/>
            <person name="Young D."/>
            <person name="Astolfi Rosado L."/>
            <person name="Pallo A."/>
            <person name="Wahni K."/>
            <person name="De Proft F."/>
            <person name="Huang J."/>
            <person name="Van Breusegem F."/>
            <person name="Messens J."/>
        </authorList>
    </citation>
    <scope>X-RAY CRYSTALLOGRAPHY (2.30 ANGSTROMS) IN COMPLEX WITH GLUTATHIONE</scope>
</reference>
<evidence type="ECO:0000250" key="1">
    <source>
        <dbReference type="UniProtKB" id="Q65XA0"/>
    </source>
</evidence>
<evidence type="ECO:0000250" key="2">
    <source>
        <dbReference type="UniProtKB" id="Q9FWR4"/>
    </source>
</evidence>
<evidence type="ECO:0000255" key="3"/>
<evidence type="ECO:0000269" key="4">
    <source>
    </source>
</evidence>
<evidence type="ECO:0000269" key="5">
    <source>
    </source>
</evidence>
<evidence type="ECO:0000269" key="6">
    <source>
    </source>
</evidence>
<evidence type="ECO:0000269" key="7">
    <source>
    </source>
</evidence>
<evidence type="ECO:0000303" key="8">
    <source>
    </source>
</evidence>
<evidence type="ECO:0000305" key="9"/>
<evidence type="ECO:0007744" key="10">
    <source>
        <dbReference type="PDB" id="5LOL"/>
    </source>
</evidence>
<evidence type="ECO:0007829" key="11">
    <source>
        <dbReference type="PDB" id="5LOL"/>
    </source>
</evidence>
<accession>Q9FRL8</accession>
<accession>Q8LB28</accession>
<gene>
    <name type="primary">DHAR2</name>
    <name type="synonym">DHAR</name>
    <name type="ordered locus">At1g75270</name>
    <name type="ORF">F22H5.1</name>
</gene>
<protein>
    <recommendedName>
        <fullName>Glutathione S-transferase DHAR2</fullName>
        <ecNumber evidence="4">2.5.1.18</ecNumber>
    </recommendedName>
    <alternativeName>
        <fullName>Chloride intracellular channel homolog 2</fullName>
        <shortName>CLIC homolog 2</shortName>
    </alternativeName>
    <alternativeName>
        <fullName evidence="8">Glutathione-dependent dehydroascorbate reductase 2</fullName>
        <shortName evidence="8">AtDHAR2</shortName>
        <shortName>CytDHAR</shortName>
        <shortName>GSH-dependent dehydroascorbate reductase 2</shortName>
        <ecNumber evidence="4">1.8.5.1</ecNumber>
    </alternativeName>
</protein>
<proteinExistence type="evidence at protein level"/>
<comment type="function">
    <text evidence="4 6">Displays a dual function. As a soluble protein, exhibits glutathione-dependent thiol transferase and dehydroascorbate (DHA) reductase activities (PubMed:12077129). Exhibits glutathione-dependent thiol transferase and dehydroascorbate (DHA) reductase activities. Key component of the ascorbate recycling system. Involved in the redox homeostasis, especially in scavenging of ROS under oxidative stresses. Plays a role in ozone tolerance.</text>
</comment>
<comment type="catalytic activity">
    <reaction evidence="4">
        <text>RX + glutathione = an S-substituted glutathione + a halide anion + H(+)</text>
        <dbReference type="Rhea" id="RHEA:16437"/>
        <dbReference type="ChEBI" id="CHEBI:15378"/>
        <dbReference type="ChEBI" id="CHEBI:16042"/>
        <dbReference type="ChEBI" id="CHEBI:17792"/>
        <dbReference type="ChEBI" id="CHEBI:57925"/>
        <dbReference type="ChEBI" id="CHEBI:90779"/>
        <dbReference type="EC" id="2.5.1.18"/>
    </reaction>
</comment>
<comment type="catalytic activity">
    <reaction evidence="4">
        <text>L-dehydroascorbate + 2 glutathione = glutathione disulfide + L-ascorbate</text>
        <dbReference type="Rhea" id="RHEA:24424"/>
        <dbReference type="ChEBI" id="CHEBI:38290"/>
        <dbReference type="ChEBI" id="CHEBI:57925"/>
        <dbReference type="ChEBI" id="CHEBI:58297"/>
        <dbReference type="ChEBI" id="CHEBI:58539"/>
        <dbReference type="EC" id="1.8.5.1"/>
    </reaction>
</comment>
<comment type="subunit">
    <text evidence="2">Monomer.</text>
</comment>
<comment type="subcellular location">
    <subcellularLocation>
        <location evidence="9">Cytoplasm</location>
        <location evidence="9">Cytosol</location>
    </subcellularLocation>
</comment>
<comment type="induction">
    <text evidence="5 6">By ozone. By salicylic acid (SA) (at protein level).</text>
</comment>
<comment type="PTM">
    <text evidence="4">Spontaneous S-glutathionylation in the presence of oxidized glutathione (GSSG).</text>
</comment>
<comment type="disruption phenotype">
    <text evidence="6">Mutant develops distinct foliar lesions under ozone exposure.</text>
</comment>
<comment type="similarity">
    <text evidence="9">Belongs to the GST superfamily. DHAR family.</text>
</comment>
<feature type="chain" id="PRO_0000395482" description="Glutathione S-transferase DHAR2">
    <location>
        <begin position="1"/>
        <end position="213"/>
    </location>
</feature>
<feature type="domain" description="GST N-terminal">
    <location>
        <begin position="10"/>
        <end position="83"/>
    </location>
</feature>
<feature type="domain" description="GST C-terminal">
    <location>
        <begin position="84"/>
        <end position="213"/>
    </location>
</feature>
<feature type="short sequence motif" description="Glutathione-binding" evidence="3">
    <location>
        <begin position="20"/>
        <end position="25"/>
    </location>
</feature>
<feature type="active site" description="Nucleophile" evidence="1">
    <location>
        <position position="20"/>
    </location>
</feature>
<feature type="binding site" evidence="1">
    <location>
        <position position="8"/>
    </location>
    <ligand>
        <name>glutathione</name>
        <dbReference type="ChEBI" id="CHEBI:57925"/>
    </ligand>
</feature>
<feature type="binding site" evidence="1">
    <location>
        <position position="8"/>
    </location>
    <ligand>
        <name>L-ascorbate</name>
        <dbReference type="ChEBI" id="CHEBI:38290"/>
    </ligand>
</feature>
<feature type="binding site" evidence="1">
    <location>
        <position position="19"/>
    </location>
    <ligand>
        <name>glutathione</name>
        <dbReference type="ChEBI" id="CHEBI:57925"/>
    </ligand>
</feature>
<feature type="binding site" evidence="1">
    <location>
        <position position="19"/>
    </location>
    <ligand>
        <name>L-ascorbate</name>
        <dbReference type="ChEBI" id="CHEBI:38290"/>
    </ligand>
</feature>
<feature type="binding site" evidence="7 10">
    <location>
        <position position="47"/>
    </location>
    <ligand>
        <name>glutathione</name>
        <dbReference type="ChEBI" id="CHEBI:57925"/>
    </ligand>
</feature>
<feature type="binding site" evidence="7 10">
    <location>
        <position position="60"/>
    </location>
    <ligand>
        <name>glutathione</name>
        <dbReference type="ChEBI" id="CHEBI:57925"/>
    </ligand>
</feature>
<feature type="binding site" evidence="7 10">
    <location>
        <position position="73"/>
    </location>
    <ligand>
        <name>glutathione</name>
        <dbReference type="ChEBI" id="CHEBI:57925"/>
    </ligand>
</feature>
<feature type="binding site" evidence="1">
    <location>
        <position position="160"/>
    </location>
    <ligand>
        <name>glutathione</name>
        <dbReference type="ChEBI" id="CHEBI:57925"/>
    </ligand>
</feature>
<feature type="binding site" evidence="1">
    <location>
        <position position="207"/>
    </location>
    <ligand>
        <name>glutathione</name>
        <dbReference type="ChEBI" id="CHEBI:57925"/>
    </ligand>
</feature>
<feature type="binding site" evidence="1">
    <location>
        <position position="210"/>
    </location>
    <ligand>
        <name>L-ascorbate</name>
        <dbReference type="ChEBI" id="CHEBI:38290"/>
    </ligand>
</feature>
<feature type="modified residue" description="S-glutathionyl cysteine" evidence="4">
    <location>
        <position position="6"/>
    </location>
</feature>
<feature type="modified residue" description="S-glutathionyl cysteine" evidence="4">
    <location>
        <position position="20"/>
    </location>
</feature>
<feature type="sequence conflict" description="In Ref. 5; AAM65005." evidence="9" ref="5">
    <original>N</original>
    <variation>K</variation>
    <location>
        <position position="195"/>
    </location>
</feature>
<feature type="strand" evidence="11">
    <location>
        <begin position="7"/>
        <end position="12"/>
    </location>
</feature>
<feature type="helix" evidence="11">
    <location>
        <begin position="14"/>
        <end position="17"/>
    </location>
</feature>
<feature type="helix" evidence="11">
    <location>
        <begin position="21"/>
        <end position="32"/>
    </location>
</feature>
<feature type="strand" evidence="11">
    <location>
        <begin position="37"/>
        <end position="42"/>
    </location>
</feature>
<feature type="helix" evidence="11">
    <location>
        <begin position="49"/>
        <end position="54"/>
    </location>
</feature>
<feature type="strand" evidence="11">
    <location>
        <begin position="62"/>
        <end position="65"/>
    </location>
</feature>
<feature type="strand" evidence="11">
    <location>
        <begin position="68"/>
        <end position="71"/>
    </location>
</feature>
<feature type="helix" evidence="11">
    <location>
        <begin position="73"/>
        <end position="83"/>
    </location>
</feature>
<feature type="helix" evidence="11">
    <location>
        <begin position="93"/>
        <end position="95"/>
    </location>
</feature>
<feature type="turn" evidence="11">
    <location>
        <begin position="96"/>
        <end position="101"/>
    </location>
</feature>
<feature type="helix" evidence="11">
    <location>
        <begin position="102"/>
        <end position="111"/>
    </location>
</feature>
<feature type="helix" evidence="11">
    <location>
        <begin position="119"/>
        <end position="136"/>
    </location>
</feature>
<feature type="strand" evidence="11">
    <location>
        <begin position="139"/>
        <end position="141"/>
    </location>
</feature>
<feature type="strand" evidence="11">
    <location>
        <begin position="144"/>
        <end position="146"/>
    </location>
</feature>
<feature type="helix" evidence="11">
    <location>
        <begin position="149"/>
        <end position="169"/>
    </location>
</feature>
<feature type="helix" evidence="11">
    <location>
        <begin position="178"/>
        <end position="188"/>
    </location>
</feature>
<feature type="helix" evidence="11">
    <location>
        <begin position="191"/>
        <end position="196"/>
    </location>
</feature>
<feature type="helix" evidence="11">
    <location>
        <begin position="200"/>
        <end position="207"/>
    </location>
</feature>
<feature type="helix" evidence="11">
    <location>
        <begin position="208"/>
        <end position="210"/>
    </location>
</feature>
<dbReference type="EC" id="2.5.1.18" evidence="4"/>
<dbReference type="EC" id="1.8.5.1" evidence="4"/>
<dbReference type="EMBL" id="AY074785">
    <property type="protein sequence ID" value="AAL71855.1"/>
    <property type="molecule type" value="mRNA"/>
</dbReference>
<dbReference type="EMBL" id="AC025814">
    <property type="protein sequence ID" value="AAG12679.1"/>
    <property type="molecule type" value="Genomic_DNA"/>
</dbReference>
<dbReference type="EMBL" id="CP002684">
    <property type="protein sequence ID" value="AEE35696.1"/>
    <property type="molecule type" value="Genomic_DNA"/>
</dbReference>
<dbReference type="EMBL" id="AY140019">
    <property type="protein sequence ID" value="AAM98161.1"/>
    <property type="molecule type" value="mRNA"/>
</dbReference>
<dbReference type="EMBL" id="BT006257">
    <property type="protein sequence ID" value="AAP13365.1"/>
    <property type="molecule type" value="mRNA"/>
</dbReference>
<dbReference type="EMBL" id="AY087460">
    <property type="protein sequence ID" value="AAM65005.1"/>
    <property type="molecule type" value="mRNA"/>
</dbReference>
<dbReference type="PIR" id="B96783">
    <property type="entry name" value="B96783"/>
</dbReference>
<dbReference type="RefSeq" id="NP_177662.1">
    <property type="nucleotide sequence ID" value="NM_106182.4"/>
</dbReference>
<dbReference type="PDB" id="5LOL">
    <property type="method" value="X-ray"/>
    <property type="resolution" value="2.30 A"/>
    <property type="chains" value="A=1-213"/>
</dbReference>
<dbReference type="PDBsum" id="5LOL"/>
<dbReference type="SMR" id="Q9FRL8"/>
<dbReference type="FunCoup" id="Q9FRL8">
    <property type="interactions" value="993"/>
</dbReference>
<dbReference type="IntAct" id="Q9FRL8">
    <property type="interactions" value="4"/>
</dbReference>
<dbReference type="STRING" id="3702.Q9FRL8"/>
<dbReference type="iPTMnet" id="Q9FRL8"/>
<dbReference type="SwissPalm" id="Q9FRL8"/>
<dbReference type="PaxDb" id="3702-AT1G75270.1"/>
<dbReference type="ProteomicsDB" id="224116"/>
<dbReference type="EnsemblPlants" id="AT1G75270.1">
    <property type="protein sequence ID" value="AT1G75270.1"/>
    <property type="gene ID" value="AT1G75270"/>
</dbReference>
<dbReference type="GeneID" id="843864"/>
<dbReference type="Gramene" id="AT1G75270.1">
    <property type="protein sequence ID" value="AT1G75270.1"/>
    <property type="gene ID" value="AT1G75270"/>
</dbReference>
<dbReference type="KEGG" id="ath:AT1G75270"/>
<dbReference type="Araport" id="AT1G75270"/>
<dbReference type="TAIR" id="AT1G75270">
    <property type="gene designation" value="DHAR2"/>
</dbReference>
<dbReference type="eggNOG" id="KOG1422">
    <property type="taxonomic scope" value="Eukaryota"/>
</dbReference>
<dbReference type="HOGENOM" id="CLU_011226_1_0_1"/>
<dbReference type="InParanoid" id="Q9FRL8"/>
<dbReference type="OMA" id="LCPPKYA"/>
<dbReference type="PhylomeDB" id="Q9FRL8"/>
<dbReference type="BioCyc" id="ARA:AT1G75270-MONOMER"/>
<dbReference type="PRO" id="PR:Q9FRL8"/>
<dbReference type="Proteomes" id="UP000006548">
    <property type="component" value="Chromosome 1"/>
</dbReference>
<dbReference type="ExpressionAtlas" id="Q9FRL8">
    <property type="expression patterns" value="baseline and differential"/>
</dbReference>
<dbReference type="GO" id="GO:0005829">
    <property type="term" value="C:cytosol"/>
    <property type="evidence" value="ECO:0000314"/>
    <property type="project" value="TAIR"/>
</dbReference>
<dbReference type="GO" id="GO:0005739">
    <property type="term" value="C:mitochondrion"/>
    <property type="evidence" value="ECO:0007005"/>
    <property type="project" value="TAIR"/>
</dbReference>
<dbReference type="GO" id="GO:0005886">
    <property type="term" value="C:plasma membrane"/>
    <property type="evidence" value="ECO:0007005"/>
    <property type="project" value="TAIR"/>
</dbReference>
<dbReference type="GO" id="GO:0043295">
    <property type="term" value="F:glutathione binding"/>
    <property type="evidence" value="ECO:0000314"/>
    <property type="project" value="TAIR"/>
</dbReference>
<dbReference type="GO" id="GO:0045174">
    <property type="term" value="F:glutathione dehydrogenase (ascorbate) activity"/>
    <property type="evidence" value="ECO:0000314"/>
    <property type="project" value="TAIR"/>
</dbReference>
<dbReference type="GO" id="GO:0004364">
    <property type="term" value="F:glutathione transferase activity"/>
    <property type="evidence" value="ECO:0007669"/>
    <property type="project" value="UniProtKB-EC"/>
</dbReference>
<dbReference type="GO" id="GO:0140547">
    <property type="term" value="P:acquisition of seed longevity"/>
    <property type="evidence" value="ECO:0000316"/>
    <property type="project" value="TAIR"/>
</dbReference>
<dbReference type="GO" id="GO:0033355">
    <property type="term" value="P:ascorbate glutathione cycle"/>
    <property type="evidence" value="ECO:0007669"/>
    <property type="project" value="InterPro"/>
</dbReference>
<dbReference type="GO" id="GO:0019852">
    <property type="term" value="P:L-ascorbic acid metabolic process"/>
    <property type="evidence" value="ECO:0000316"/>
    <property type="project" value="TAIR"/>
</dbReference>
<dbReference type="GO" id="GO:0080151">
    <property type="term" value="P:positive regulation of salicylic acid mediated signaling pathway"/>
    <property type="evidence" value="ECO:0000316"/>
    <property type="project" value="TAIR"/>
</dbReference>
<dbReference type="GO" id="GO:0010731">
    <property type="term" value="P:protein glutathionylation"/>
    <property type="evidence" value="ECO:0000314"/>
    <property type="project" value="TAIR"/>
</dbReference>
<dbReference type="CDD" id="cd03201">
    <property type="entry name" value="GST_C_DHAR"/>
    <property type="match status" value="1"/>
</dbReference>
<dbReference type="CDD" id="cd00570">
    <property type="entry name" value="GST_N_family"/>
    <property type="match status" value="1"/>
</dbReference>
<dbReference type="FunFam" id="3.40.30.10:FF:000102">
    <property type="entry name" value="Glutathione S-transferase DHAR3 chloroplastic"/>
    <property type="match status" value="1"/>
</dbReference>
<dbReference type="FunFam" id="1.20.1050.10:FF:000029">
    <property type="entry name" value="Glutathione S-transferase DHAR3, chloroplastic"/>
    <property type="match status" value="1"/>
</dbReference>
<dbReference type="Gene3D" id="1.20.1050.10">
    <property type="match status" value="1"/>
</dbReference>
<dbReference type="Gene3D" id="3.40.30.10">
    <property type="entry name" value="Glutaredoxin"/>
    <property type="match status" value="1"/>
</dbReference>
<dbReference type="InterPro" id="IPR044627">
    <property type="entry name" value="DHAR1/2/3/4"/>
</dbReference>
<dbReference type="InterPro" id="IPR010987">
    <property type="entry name" value="Glutathione-S-Trfase_C-like"/>
</dbReference>
<dbReference type="InterPro" id="IPR036282">
    <property type="entry name" value="Glutathione-S-Trfase_C_sf"/>
</dbReference>
<dbReference type="InterPro" id="IPR040079">
    <property type="entry name" value="Glutathione_S-Trfase"/>
</dbReference>
<dbReference type="InterPro" id="IPR004045">
    <property type="entry name" value="Glutathione_S-Trfase_N"/>
</dbReference>
<dbReference type="InterPro" id="IPR036249">
    <property type="entry name" value="Thioredoxin-like_sf"/>
</dbReference>
<dbReference type="PANTHER" id="PTHR44420">
    <property type="entry name" value="GLUTATHIONE S-TRANSFERASE DHAR2-RELATED"/>
    <property type="match status" value="1"/>
</dbReference>
<dbReference type="PANTHER" id="PTHR44420:SF2">
    <property type="entry name" value="GLUTATHIONE S-TRANSFERASE DHAR2-RELATED"/>
    <property type="match status" value="1"/>
</dbReference>
<dbReference type="Pfam" id="PF13410">
    <property type="entry name" value="GST_C_2"/>
    <property type="match status" value="1"/>
</dbReference>
<dbReference type="Pfam" id="PF13409">
    <property type="entry name" value="GST_N_2"/>
    <property type="match status" value="1"/>
</dbReference>
<dbReference type="SFLD" id="SFLDS00019">
    <property type="entry name" value="Glutathione_Transferase_(cytos"/>
    <property type="match status" value="1"/>
</dbReference>
<dbReference type="SFLD" id="SFLDG00358">
    <property type="entry name" value="Main_(cytGST)"/>
    <property type="match status" value="1"/>
</dbReference>
<dbReference type="SUPFAM" id="SSF47616">
    <property type="entry name" value="GST C-terminal domain-like"/>
    <property type="match status" value="1"/>
</dbReference>
<dbReference type="SUPFAM" id="SSF52833">
    <property type="entry name" value="Thioredoxin-like"/>
    <property type="match status" value="1"/>
</dbReference>
<dbReference type="PROSITE" id="PS50405">
    <property type="entry name" value="GST_CTER"/>
    <property type="match status" value="1"/>
</dbReference>
<dbReference type="PROSITE" id="PS50404">
    <property type="entry name" value="GST_NTER"/>
    <property type="match status" value="1"/>
</dbReference>
<keyword id="KW-0002">3D-structure</keyword>
<keyword id="KW-0963">Cytoplasm</keyword>
<keyword id="KW-0216">Detoxification</keyword>
<keyword id="KW-0318">Glutathionylation</keyword>
<keyword id="KW-0560">Oxidoreductase</keyword>
<keyword id="KW-1185">Reference proteome</keyword>
<keyword id="KW-0346">Stress response</keyword>
<keyword id="KW-0808">Transferase</keyword>
<organism>
    <name type="scientific">Arabidopsis thaliana</name>
    <name type="common">Mouse-ear cress</name>
    <dbReference type="NCBI Taxonomy" id="3702"/>
    <lineage>
        <taxon>Eukaryota</taxon>
        <taxon>Viridiplantae</taxon>
        <taxon>Streptophyta</taxon>
        <taxon>Embryophyta</taxon>
        <taxon>Tracheophyta</taxon>
        <taxon>Spermatophyta</taxon>
        <taxon>Magnoliopsida</taxon>
        <taxon>eudicotyledons</taxon>
        <taxon>Gunneridae</taxon>
        <taxon>Pentapetalae</taxon>
        <taxon>rosids</taxon>
        <taxon>malvids</taxon>
        <taxon>Brassicales</taxon>
        <taxon>Brassicaceae</taxon>
        <taxon>Camelineae</taxon>
        <taxon>Arabidopsis</taxon>
    </lineage>
</organism>
<sequence>MALDICVKVAVGAPDVLGDCPFSQRVLLTLEEKKLPYKTHLINVSDKPQWFLDISPEGKVPVVKLDGKWVADSDVIVGLLEEKYPEPSLKTPPEFASVGSKIFGAFVTFLKSKDANDGSEKALVDELEALENHLKTHSGPFVAGEKITAVDLSLAPKLYHLEVALGHYKNWSVPESLTSVRNYAKALFSRESFENTKAKKEIVVAGWESKVNA</sequence>